<name>Y764_BRASO</name>
<proteinExistence type="inferred from homology"/>
<dbReference type="EMBL" id="CU234118">
    <property type="protein sequence ID" value="CAL74689.1"/>
    <property type="molecule type" value="Genomic_DNA"/>
</dbReference>
<dbReference type="RefSeq" id="WP_006611474.1">
    <property type="nucleotide sequence ID" value="NC_009445.1"/>
</dbReference>
<dbReference type="SMR" id="A4YLB3"/>
<dbReference type="STRING" id="114615.BRADO0764"/>
<dbReference type="KEGG" id="bra:BRADO0764"/>
<dbReference type="eggNOG" id="COG0718">
    <property type="taxonomic scope" value="Bacteria"/>
</dbReference>
<dbReference type="HOGENOM" id="CLU_140930_0_1_5"/>
<dbReference type="OrthoDB" id="9803080at2"/>
<dbReference type="Proteomes" id="UP000001994">
    <property type="component" value="Chromosome"/>
</dbReference>
<dbReference type="GO" id="GO:0043590">
    <property type="term" value="C:bacterial nucleoid"/>
    <property type="evidence" value="ECO:0007669"/>
    <property type="project" value="UniProtKB-UniRule"/>
</dbReference>
<dbReference type="GO" id="GO:0005829">
    <property type="term" value="C:cytosol"/>
    <property type="evidence" value="ECO:0007669"/>
    <property type="project" value="TreeGrafter"/>
</dbReference>
<dbReference type="GO" id="GO:0003677">
    <property type="term" value="F:DNA binding"/>
    <property type="evidence" value="ECO:0007669"/>
    <property type="project" value="UniProtKB-UniRule"/>
</dbReference>
<dbReference type="Gene3D" id="3.30.1310.10">
    <property type="entry name" value="Nucleoid-associated protein YbaB-like domain"/>
    <property type="match status" value="1"/>
</dbReference>
<dbReference type="HAMAP" id="MF_00274">
    <property type="entry name" value="DNA_YbaB_EbfC"/>
    <property type="match status" value="1"/>
</dbReference>
<dbReference type="InterPro" id="IPR036894">
    <property type="entry name" value="YbaB-like_sf"/>
</dbReference>
<dbReference type="InterPro" id="IPR004401">
    <property type="entry name" value="YbaB/EbfC"/>
</dbReference>
<dbReference type="NCBIfam" id="TIGR00103">
    <property type="entry name" value="DNA_YbaB_EbfC"/>
    <property type="match status" value="1"/>
</dbReference>
<dbReference type="PANTHER" id="PTHR33449">
    <property type="entry name" value="NUCLEOID-ASSOCIATED PROTEIN YBAB"/>
    <property type="match status" value="1"/>
</dbReference>
<dbReference type="PANTHER" id="PTHR33449:SF1">
    <property type="entry name" value="NUCLEOID-ASSOCIATED PROTEIN YBAB"/>
    <property type="match status" value="1"/>
</dbReference>
<dbReference type="Pfam" id="PF02575">
    <property type="entry name" value="YbaB_DNA_bd"/>
    <property type="match status" value="1"/>
</dbReference>
<dbReference type="PIRSF" id="PIRSF004555">
    <property type="entry name" value="UCP004555"/>
    <property type="match status" value="1"/>
</dbReference>
<dbReference type="SUPFAM" id="SSF82607">
    <property type="entry name" value="YbaB-like"/>
    <property type="match status" value="1"/>
</dbReference>
<sequence length="106" mass="11331">MADFLGMMKQAAQLQSKMQEMQAELGNVEVEGISGGGLVAVRMTAKMDVKSIKIDPSLLKPEEAEILEDLLVTAHGDARRKAEAAMQEKMQAITGKLGLPPGFGFG</sequence>
<reference key="1">
    <citation type="journal article" date="2007" name="Science">
        <title>Legumes symbioses: absence of nod genes in photosynthetic bradyrhizobia.</title>
        <authorList>
            <person name="Giraud E."/>
            <person name="Moulin L."/>
            <person name="Vallenet D."/>
            <person name="Barbe V."/>
            <person name="Cytryn E."/>
            <person name="Avarre J.-C."/>
            <person name="Jaubert M."/>
            <person name="Simon D."/>
            <person name="Cartieaux F."/>
            <person name="Prin Y."/>
            <person name="Bena G."/>
            <person name="Hannibal L."/>
            <person name="Fardoux J."/>
            <person name="Kojadinovic M."/>
            <person name="Vuillet L."/>
            <person name="Lajus A."/>
            <person name="Cruveiller S."/>
            <person name="Rouy Z."/>
            <person name="Mangenot S."/>
            <person name="Segurens B."/>
            <person name="Dossat C."/>
            <person name="Franck W.L."/>
            <person name="Chang W.-S."/>
            <person name="Saunders E."/>
            <person name="Bruce D."/>
            <person name="Richardson P."/>
            <person name="Normand P."/>
            <person name="Dreyfus B."/>
            <person name="Pignol D."/>
            <person name="Stacey G."/>
            <person name="Emerich D."/>
            <person name="Vermeglio A."/>
            <person name="Medigue C."/>
            <person name="Sadowsky M."/>
        </authorList>
    </citation>
    <scope>NUCLEOTIDE SEQUENCE [LARGE SCALE GENOMIC DNA]</scope>
    <source>
        <strain>ORS 278</strain>
    </source>
</reference>
<comment type="function">
    <text evidence="1">Binds to DNA and alters its conformation. May be involved in regulation of gene expression, nucleoid organization and DNA protection.</text>
</comment>
<comment type="subunit">
    <text evidence="1">Homodimer.</text>
</comment>
<comment type="subcellular location">
    <subcellularLocation>
        <location evidence="1">Cytoplasm</location>
        <location evidence="1">Nucleoid</location>
    </subcellularLocation>
</comment>
<comment type="similarity">
    <text evidence="1">Belongs to the YbaB/EbfC family.</text>
</comment>
<protein>
    <recommendedName>
        <fullName evidence="1">Nucleoid-associated protein BRADO0764</fullName>
    </recommendedName>
</protein>
<accession>A4YLB3</accession>
<gene>
    <name type="ordered locus">BRADO0764</name>
</gene>
<organism>
    <name type="scientific">Bradyrhizobium sp. (strain ORS 278)</name>
    <dbReference type="NCBI Taxonomy" id="114615"/>
    <lineage>
        <taxon>Bacteria</taxon>
        <taxon>Pseudomonadati</taxon>
        <taxon>Pseudomonadota</taxon>
        <taxon>Alphaproteobacteria</taxon>
        <taxon>Hyphomicrobiales</taxon>
        <taxon>Nitrobacteraceae</taxon>
        <taxon>Bradyrhizobium</taxon>
    </lineage>
</organism>
<keyword id="KW-0963">Cytoplasm</keyword>
<keyword id="KW-0238">DNA-binding</keyword>
<keyword id="KW-1185">Reference proteome</keyword>
<feature type="chain" id="PRO_1000003694" description="Nucleoid-associated protein BRADO0764">
    <location>
        <begin position="1"/>
        <end position="106"/>
    </location>
</feature>
<evidence type="ECO:0000255" key="1">
    <source>
        <dbReference type="HAMAP-Rule" id="MF_00274"/>
    </source>
</evidence>